<feature type="chain" id="PRO_1000076521" description="Elongation factor P">
    <location>
        <begin position="1"/>
        <end position="186"/>
    </location>
</feature>
<evidence type="ECO:0000255" key="1">
    <source>
        <dbReference type="HAMAP-Rule" id="MF_00141"/>
    </source>
</evidence>
<accession>A9M4D6</accession>
<protein>
    <recommendedName>
        <fullName evidence="1">Elongation factor P</fullName>
        <shortName evidence="1">EF-P</shortName>
    </recommendedName>
</protein>
<dbReference type="EMBL" id="CP000381">
    <property type="protein sequence ID" value="ABX73062.1"/>
    <property type="molecule type" value="Genomic_DNA"/>
</dbReference>
<dbReference type="RefSeq" id="WP_002219406.1">
    <property type="nucleotide sequence ID" value="NC_010120.1"/>
</dbReference>
<dbReference type="SMR" id="A9M4D6"/>
<dbReference type="GeneID" id="86928945"/>
<dbReference type="KEGG" id="nmn:NMCC_0880"/>
<dbReference type="HOGENOM" id="CLU_074944_2_1_4"/>
<dbReference type="UniPathway" id="UPA00345"/>
<dbReference type="Proteomes" id="UP000001177">
    <property type="component" value="Chromosome"/>
</dbReference>
<dbReference type="GO" id="GO:0005737">
    <property type="term" value="C:cytoplasm"/>
    <property type="evidence" value="ECO:0007669"/>
    <property type="project" value="UniProtKB-SubCell"/>
</dbReference>
<dbReference type="GO" id="GO:0003746">
    <property type="term" value="F:translation elongation factor activity"/>
    <property type="evidence" value="ECO:0007669"/>
    <property type="project" value="UniProtKB-UniRule"/>
</dbReference>
<dbReference type="GO" id="GO:0043043">
    <property type="term" value="P:peptide biosynthetic process"/>
    <property type="evidence" value="ECO:0007669"/>
    <property type="project" value="InterPro"/>
</dbReference>
<dbReference type="CDD" id="cd04470">
    <property type="entry name" value="S1_EF-P_repeat_1"/>
    <property type="match status" value="1"/>
</dbReference>
<dbReference type="CDD" id="cd05794">
    <property type="entry name" value="S1_EF-P_repeat_2"/>
    <property type="match status" value="1"/>
</dbReference>
<dbReference type="FunFam" id="2.30.30.30:FF:000003">
    <property type="entry name" value="Elongation factor P"/>
    <property type="match status" value="1"/>
</dbReference>
<dbReference type="FunFam" id="2.40.50.140:FF:000004">
    <property type="entry name" value="Elongation factor P"/>
    <property type="match status" value="1"/>
</dbReference>
<dbReference type="FunFam" id="2.40.50.140:FF:000009">
    <property type="entry name" value="Elongation factor P"/>
    <property type="match status" value="1"/>
</dbReference>
<dbReference type="Gene3D" id="2.30.30.30">
    <property type="match status" value="1"/>
</dbReference>
<dbReference type="Gene3D" id="2.40.50.140">
    <property type="entry name" value="Nucleic acid-binding proteins"/>
    <property type="match status" value="2"/>
</dbReference>
<dbReference type="HAMAP" id="MF_00141">
    <property type="entry name" value="EF_P"/>
    <property type="match status" value="1"/>
</dbReference>
<dbReference type="InterPro" id="IPR015365">
    <property type="entry name" value="Elong-fact-P_C"/>
</dbReference>
<dbReference type="InterPro" id="IPR012340">
    <property type="entry name" value="NA-bd_OB-fold"/>
</dbReference>
<dbReference type="InterPro" id="IPR014722">
    <property type="entry name" value="Rib_uL2_dom2"/>
</dbReference>
<dbReference type="InterPro" id="IPR020599">
    <property type="entry name" value="Transl_elong_fac_P/YeiP"/>
</dbReference>
<dbReference type="InterPro" id="IPR013185">
    <property type="entry name" value="Transl_elong_KOW-like"/>
</dbReference>
<dbReference type="InterPro" id="IPR001059">
    <property type="entry name" value="Transl_elong_P/YeiP_cen"/>
</dbReference>
<dbReference type="InterPro" id="IPR011768">
    <property type="entry name" value="Transl_elongation_fac_P"/>
</dbReference>
<dbReference type="InterPro" id="IPR008991">
    <property type="entry name" value="Translation_prot_SH3-like_sf"/>
</dbReference>
<dbReference type="NCBIfam" id="TIGR00038">
    <property type="entry name" value="efp"/>
    <property type="match status" value="1"/>
</dbReference>
<dbReference type="NCBIfam" id="NF001810">
    <property type="entry name" value="PRK00529.1"/>
    <property type="match status" value="1"/>
</dbReference>
<dbReference type="PANTHER" id="PTHR30053">
    <property type="entry name" value="ELONGATION FACTOR P"/>
    <property type="match status" value="1"/>
</dbReference>
<dbReference type="PANTHER" id="PTHR30053:SF12">
    <property type="entry name" value="ELONGATION FACTOR P (EF-P) FAMILY PROTEIN"/>
    <property type="match status" value="1"/>
</dbReference>
<dbReference type="Pfam" id="PF01132">
    <property type="entry name" value="EFP"/>
    <property type="match status" value="1"/>
</dbReference>
<dbReference type="Pfam" id="PF08207">
    <property type="entry name" value="EFP_N"/>
    <property type="match status" value="1"/>
</dbReference>
<dbReference type="Pfam" id="PF09285">
    <property type="entry name" value="Elong-fact-P_C"/>
    <property type="match status" value="1"/>
</dbReference>
<dbReference type="PIRSF" id="PIRSF005901">
    <property type="entry name" value="EF-P"/>
    <property type="match status" value="1"/>
</dbReference>
<dbReference type="SMART" id="SM01185">
    <property type="entry name" value="EFP"/>
    <property type="match status" value="1"/>
</dbReference>
<dbReference type="SMART" id="SM00841">
    <property type="entry name" value="Elong-fact-P_C"/>
    <property type="match status" value="1"/>
</dbReference>
<dbReference type="SUPFAM" id="SSF50249">
    <property type="entry name" value="Nucleic acid-binding proteins"/>
    <property type="match status" value="2"/>
</dbReference>
<dbReference type="SUPFAM" id="SSF50104">
    <property type="entry name" value="Translation proteins SH3-like domain"/>
    <property type="match status" value="1"/>
</dbReference>
<organism>
    <name type="scientific">Neisseria meningitidis serogroup C (strain 053442)</name>
    <dbReference type="NCBI Taxonomy" id="374833"/>
    <lineage>
        <taxon>Bacteria</taxon>
        <taxon>Pseudomonadati</taxon>
        <taxon>Pseudomonadota</taxon>
        <taxon>Betaproteobacteria</taxon>
        <taxon>Neisseriales</taxon>
        <taxon>Neisseriaceae</taxon>
        <taxon>Neisseria</taxon>
    </lineage>
</organism>
<proteinExistence type="inferred from homology"/>
<name>EFP_NEIM0</name>
<keyword id="KW-0963">Cytoplasm</keyword>
<keyword id="KW-0251">Elongation factor</keyword>
<keyword id="KW-0648">Protein biosynthesis</keyword>
<sequence length="186" mass="20880">MKTAQELRAGNVFMVGNDPMVVQKTEYIKGGRSSAKVSMKLKNLLTGAASETIYKADDKFDVVILSRKNCTYSYFADPMYVFMDEEFNQYEIEADNIGDALKFIVDGMEDQCEVTFYEGNPISVELPTIIVREVEYTEPAVKGDTSGKVMKTARLVGGTEIQVMSYIENGDKVEIDTRTGEFRKRA</sequence>
<reference key="1">
    <citation type="journal article" date="2008" name="Genomics">
        <title>Characterization of ST-4821 complex, a unique Neisseria meningitidis clone.</title>
        <authorList>
            <person name="Peng J."/>
            <person name="Yang L."/>
            <person name="Yang F."/>
            <person name="Yang J."/>
            <person name="Yan Y."/>
            <person name="Nie H."/>
            <person name="Zhang X."/>
            <person name="Xiong Z."/>
            <person name="Jiang Y."/>
            <person name="Cheng F."/>
            <person name="Xu X."/>
            <person name="Chen S."/>
            <person name="Sun L."/>
            <person name="Li W."/>
            <person name="Shen Y."/>
            <person name="Shao Z."/>
            <person name="Liang X."/>
            <person name="Xu J."/>
            <person name="Jin Q."/>
        </authorList>
    </citation>
    <scope>NUCLEOTIDE SEQUENCE [LARGE SCALE GENOMIC DNA]</scope>
    <source>
        <strain>053442</strain>
    </source>
</reference>
<comment type="function">
    <text evidence="1">Involved in peptide bond synthesis. Stimulates efficient translation and peptide-bond synthesis on native or reconstituted 70S ribosomes in vitro. Probably functions indirectly by altering the affinity of the ribosome for aminoacyl-tRNA, thus increasing their reactivity as acceptors for peptidyl transferase.</text>
</comment>
<comment type="pathway">
    <text evidence="1">Protein biosynthesis; polypeptide chain elongation.</text>
</comment>
<comment type="subcellular location">
    <subcellularLocation>
        <location evidence="1">Cytoplasm</location>
    </subcellularLocation>
</comment>
<comment type="similarity">
    <text evidence="1">Belongs to the elongation factor P family.</text>
</comment>
<gene>
    <name evidence="1" type="primary">efp</name>
    <name type="ordered locus">NMCC_0880</name>
</gene>